<organism>
    <name type="scientific">Mus musculus</name>
    <name type="common">Mouse</name>
    <dbReference type="NCBI Taxonomy" id="10090"/>
    <lineage>
        <taxon>Eukaryota</taxon>
        <taxon>Metazoa</taxon>
        <taxon>Chordata</taxon>
        <taxon>Craniata</taxon>
        <taxon>Vertebrata</taxon>
        <taxon>Euteleostomi</taxon>
        <taxon>Mammalia</taxon>
        <taxon>Eutheria</taxon>
        <taxon>Euarchontoglires</taxon>
        <taxon>Glires</taxon>
        <taxon>Rodentia</taxon>
        <taxon>Myomorpha</taxon>
        <taxon>Muroidea</taxon>
        <taxon>Muridae</taxon>
        <taxon>Murinae</taxon>
        <taxon>Mus</taxon>
        <taxon>Mus</taxon>
    </lineage>
</organism>
<gene>
    <name type="primary">Umps</name>
</gene>
<feature type="chain" id="PRO_0000139650" description="Uridine 5'-monophosphate synthase">
    <location>
        <begin position="1"/>
        <end position="481"/>
    </location>
</feature>
<feature type="region of interest" description="OPRTase">
    <location>
        <begin position="1"/>
        <end position="214"/>
    </location>
</feature>
<feature type="region of interest" description="Domain linker">
    <location>
        <begin position="215"/>
        <end position="220"/>
    </location>
</feature>
<feature type="region of interest" description="OMPdecase">
    <location>
        <begin position="221"/>
        <end position="481"/>
    </location>
</feature>
<feature type="active site" description="For OMPdecase activity" evidence="1">
    <location>
        <position position="314"/>
    </location>
</feature>
<feature type="active site" description="For OMPdecase activity" evidence="1">
    <location>
        <position position="317"/>
    </location>
</feature>
<feature type="binding site" evidence="1">
    <location>
        <position position="257"/>
    </location>
    <ligand>
        <name>orotidine 5'-phosphate</name>
        <dbReference type="ChEBI" id="CHEBI:57538"/>
    </ligand>
</feature>
<feature type="binding site" evidence="1">
    <location>
        <position position="257"/>
    </location>
    <ligand>
        <name>UMP</name>
        <dbReference type="ChEBI" id="CHEBI:57865"/>
    </ligand>
</feature>
<feature type="binding site" evidence="1">
    <location>
        <position position="259"/>
    </location>
    <ligand>
        <name>UMP</name>
        <dbReference type="ChEBI" id="CHEBI:57865"/>
    </ligand>
</feature>
<feature type="binding site" evidence="1">
    <location>
        <begin position="281"/>
        <end position="283"/>
    </location>
    <ligand>
        <name>UMP</name>
        <dbReference type="ChEBI" id="CHEBI:57865"/>
    </ligand>
</feature>
<feature type="binding site" evidence="1">
    <location>
        <position position="281"/>
    </location>
    <ligand>
        <name>orotidine 5'-phosphate</name>
        <dbReference type="ChEBI" id="CHEBI:57538"/>
    </ligand>
</feature>
<feature type="binding site" evidence="1">
    <location>
        <position position="314"/>
    </location>
    <ligand>
        <name>orotidine 5'-phosphate</name>
        <dbReference type="ChEBI" id="CHEBI:57538"/>
    </ligand>
</feature>
<feature type="binding site" evidence="1">
    <location>
        <position position="317"/>
    </location>
    <ligand>
        <name>orotidine 5'-phosphate</name>
        <dbReference type="ChEBI" id="CHEBI:57538"/>
    </ligand>
</feature>
<feature type="binding site" evidence="1">
    <location>
        <position position="317"/>
    </location>
    <ligand>
        <name>UMP</name>
        <dbReference type="ChEBI" id="CHEBI:57865"/>
    </ligand>
</feature>
<feature type="binding site" evidence="1">
    <location>
        <position position="321"/>
    </location>
    <ligand>
        <name>orotidine 5'-phosphate</name>
        <dbReference type="ChEBI" id="CHEBI:57538"/>
    </ligand>
</feature>
<feature type="binding site" evidence="1">
    <location>
        <position position="321"/>
    </location>
    <ligand>
        <name>UMP</name>
        <dbReference type="ChEBI" id="CHEBI:57865"/>
    </ligand>
</feature>
<feature type="binding site" evidence="1">
    <location>
        <position position="372"/>
    </location>
    <ligand>
        <name>orotidine 5'-phosphate</name>
        <dbReference type="ChEBI" id="CHEBI:57538"/>
    </ligand>
</feature>
<feature type="binding site" evidence="1">
    <location>
        <position position="372"/>
    </location>
    <ligand>
        <name>UMP</name>
        <dbReference type="ChEBI" id="CHEBI:57865"/>
    </ligand>
</feature>
<feature type="binding site" evidence="1">
    <location>
        <begin position="430"/>
        <end position="432"/>
    </location>
    <ligand>
        <name>orotidine 5'-phosphate</name>
        <dbReference type="ChEBI" id="CHEBI:57538"/>
    </ligand>
</feature>
<feature type="binding site" evidence="1">
    <location>
        <begin position="430"/>
        <end position="432"/>
    </location>
    <ligand>
        <name>UMP</name>
        <dbReference type="ChEBI" id="CHEBI:57865"/>
    </ligand>
</feature>
<feature type="binding site" evidence="1">
    <location>
        <begin position="450"/>
        <end position="451"/>
    </location>
    <ligand>
        <name>orotidine 5'-phosphate</name>
        <dbReference type="ChEBI" id="CHEBI:57538"/>
    </ligand>
</feature>
<feature type="binding site" evidence="1">
    <location>
        <begin position="450"/>
        <end position="451"/>
    </location>
    <ligand>
        <name>UMP</name>
        <dbReference type="ChEBI" id="CHEBI:57865"/>
    </ligand>
</feature>
<feature type="modified residue" description="Phosphotyrosine" evidence="1">
    <location>
        <position position="37"/>
    </location>
</feature>
<protein>
    <recommendedName>
        <fullName>Uridine 5'-monophosphate synthase</fullName>
        <shortName>UMP synthase</shortName>
    </recommendedName>
    <domain>
        <recommendedName>
            <fullName>Orotate phosphoribosyltransferase</fullName>
            <shortName>OPRTase</shortName>
            <ecNumber evidence="1">2.4.2.10</ecNumber>
        </recommendedName>
    </domain>
    <domain>
        <recommendedName>
            <fullName>Orotidine 5'-phosphate decarboxylase</fullName>
            <ecNumber evidence="1">4.1.1.23</ecNumber>
        </recommendedName>
        <alternativeName>
            <fullName>OMPdecase</fullName>
        </alternativeName>
    </domain>
</protein>
<proteinExistence type="evidence at protein level"/>
<keyword id="KW-0210">Decarboxylase</keyword>
<keyword id="KW-0328">Glycosyltransferase</keyword>
<keyword id="KW-0456">Lyase</keyword>
<keyword id="KW-0511">Multifunctional enzyme</keyword>
<keyword id="KW-0597">Phosphoprotein</keyword>
<keyword id="KW-0665">Pyrimidine biosynthesis</keyword>
<keyword id="KW-1185">Reference proteome</keyword>
<keyword id="KW-0808">Transferase</keyword>
<dbReference type="EC" id="2.4.2.10" evidence="1"/>
<dbReference type="EC" id="4.1.1.23" evidence="1"/>
<dbReference type="EMBL" id="BC003887">
    <property type="protein sequence ID" value="AAH03887.1"/>
    <property type="molecule type" value="mRNA"/>
</dbReference>
<dbReference type="EMBL" id="M29395">
    <property type="protein sequence ID" value="AAA39859.1"/>
    <property type="molecule type" value="mRNA"/>
</dbReference>
<dbReference type="CCDS" id="CCDS28136.1"/>
<dbReference type="PIR" id="A25323">
    <property type="entry name" value="DCMSOP"/>
</dbReference>
<dbReference type="RefSeq" id="NP_033497.1">
    <property type="nucleotide sequence ID" value="NM_009471.3"/>
</dbReference>
<dbReference type="SMR" id="P13439"/>
<dbReference type="BioGRID" id="204442">
    <property type="interactions" value="8"/>
</dbReference>
<dbReference type="CORUM" id="P13439"/>
<dbReference type="FunCoup" id="P13439">
    <property type="interactions" value="5066"/>
</dbReference>
<dbReference type="IntAct" id="P13439">
    <property type="interactions" value="2"/>
</dbReference>
<dbReference type="MINT" id="P13439"/>
<dbReference type="STRING" id="10090.ENSMUSP00000023510"/>
<dbReference type="GlyGen" id="P13439">
    <property type="glycosylation" value="1 site, 1 O-linked glycan (1 site)"/>
</dbReference>
<dbReference type="iPTMnet" id="P13439"/>
<dbReference type="PhosphoSitePlus" id="P13439"/>
<dbReference type="SwissPalm" id="P13439"/>
<dbReference type="jPOST" id="P13439"/>
<dbReference type="PaxDb" id="10090-ENSMUSP00000023510"/>
<dbReference type="PeptideAtlas" id="P13439"/>
<dbReference type="ProteomicsDB" id="297867"/>
<dbReference type="Pumba" id="P13439"/>
<dbReference type="Antibodypedia" id="32990">
    <property type="antibodies" value="224 antibodies from 32 providers"/>
</dbReference>
<dbReference type="DNASU" id="22247"/>
<dbReference type="Ensembl" id="ENSMUST00000023510.7">
    <property type="protein sequence ID" value="ENSMUSP00000023510.7"/>
    <property type="gene ID" value="ENSMUSG00000022814.7"/>
</dbReference>
<dbReference type="GeneID" id="22247"/>
<dbReference type="KEGG" id="mmu:22247"/>
<dbReference type="UCSC" id="uc007zap.1">
    <property type="organism name" value="mouse"/>
</dbReference>
<dbReference type="AGR" id="MGI:1298388"/>
<dbReference type="CTD" id="7372"/>
<dbReference type="MGI" id="MGI:1298388">
    <property type="gene designation" value="Umps"/>
</dbReference>
<dbReference type="VEuPathDB" id="HostDB:ENSMUSG00000022814"/>
<dbReference type="eggNOG" id="KOG1377">
    <property type="taxonomic scope" value="Eukaryota"/>
</dbReference>
<dbReference type="GeneTree" id="ENSGT00390000001856"/>
<dbReference type="HOGENOM" id="CLU_049275_1_0_1"/>
<dbReference type="InParanoid" id="P13439"/>
<dbReference type="OMA" id="SAKHVCG"/>
<dbReference type="OrthoDB" id="10263753at2759"/>
<dbReference type="PhylomeDB" id="P13439"/>
<dbReference type="TreeFam" id="TF314694"/>
<dbReference type="Reactome" id="R-MMU-500753">
    <property type="pathway name" value="Pyrimidine biosynthesis"/>
</dbReference>
<dbReference type="UniPathway" id="UPA00070">
    <property type="reaction ID" value="UER00119"/>
</dbReference>
<dbReference type="UniPathway" id="UPA00070">
    <property type="reaction ID" value="UER00120"/>
</dbReference>
<dbReference type="BioGRID-ORCS" id="22247">
    <property type="hits" value="28 hits in 77 CRISPR screens"/>
</dbReference>
<dbReference type="ChiTaRS" id="Umps">
    <property type="organism name" value="mouse"/>
</dbReference>
<dbReference type="PRO" id="PR:P13439"/>
<dbReference type="Proteomes" id="UP000000589">
    <property type="component" value="Chromosome 16"/>
</dbReference>
<dbReference type="RNAct" id="P13439">
    <property type="molecule type" value="protein"/>
</dbReference>
<dbReference type="Bgee" id="ENSMUSG00000022814">
    <property type="expression patterns" value="Expressed in primitive streak and 249 other cell types or tissues"/>
</dbReference>
<dbReference type="ExpressionAtlas" id="P13439">
    <property type="expression patterns" value="baseline and differential"/>
</dbReference>
<dbReference type="GO" id="GO:0005737">
    <property type="term" value="C:cytoplasm"/>
    <property type="evidence" value="ECO:0007669"/>
    <property type="project" value="Ensembl"/>
</dbReference>
<dbReference type="GO" id="GO:0005634">
    <property type="term" value="C:nucleus"/>
    <property type="evidence" value="ECO:0007669"/>
    <property type="project" value="Ensembl"/>
</dbReference>
<dbReference type="GO" id="GO:0004588">
    <property type="term" value="F:orotate phosphoribosyltransferase activity"/>
    <property type="evidence" value="ECO:0000314"/>
    <property type="project" value="MGI"/>
</dbReference>
<dbReference type="GO" id="GO:0004590">
    <property type="term" value="F:orotidine-5'-phosphate decarboxylase activity"/>
    <property type="evidence" value="ECO:0000314"/>
    <property type="project" value="MGI"/>
</dbReference>
<dbReference type="GO" id="GO:0006207">
    <property type="term" value="P:'de novo' pyrimidine nucleobase biosynthetic process"/>
    <property type="evidence" value="ECO:0007669"/>
    <property type="project" value="InterPro"/>
</dbReference>
<dbReference type="GO" id="GO:0044205">
    <property type="term" value="P:'de novo' UMP biosynthetic process"/>
    <property type="evidence" value="ECO:0000314"/>
    <property type="project" value="MGI"/>
</dbReference>
<dbReference type="GO" id="GO:0006225">
    <property type="term" value="P:UDP biosynthetic process"/>
    <property type="evidence" value="ECO:0000314"/>
    <property type="project" value="MGI"/>
</dbReference>
<dbReference type="CDD" id="cd04725">
    <property type="entry name" value="OMP_decarboxylase_like"/>
    <property type="match status" value="1"/>
</dbReference>
<dbReference type="CDD" id="cd06223">
    <property type="entry name" value="PRTases_typeI"/>
    <property type="match status" value="1"/>
</dbReference>
<dbReference type="FunFam" id="3.20.20.70:FF:000092">
    <property type="entry name" value="Uridine monophosphate synthetase"/>
    <property type="match status" value="1"/>
</dbReference>
<dbReference type="FunFam" id="3.40.50.2020:FF:000025">
    <property type="entry name" value="Uridine monophosphate synthetase"/>
    <property type="match status" value="1"/>
</dbReference>
<dbReference type="Gene3D" id="3.40.50.2020">
    <property type="match status" value="1"/>
</dbReference>
<dbReference type="Gene3D" id="3.20.20.70">
    <property type="entry name" value="Aldolase class I"/>
    <property type="match status" value="1"/>
</dbReference>
<dbReference type="HAMAP" id="MF_01208">
    <property type="entry name" value="PyrE"/>
    <property type="match status" value="1"/>
</dbReference>
<dbReference type="InterPro" id="IPR013785">
    <property type="entry name" value="Aldolase_TIM"/>
</dbReference>
<dbReference type="InterPro" id="IPR014732">
    <property type="entry name" value="OMPdecase"/>
</dbReference>
<dbReference type="InterPro" id="IPR018089">
    <property type="entry name" value="OMPdecase_AS"/>
</dbReference>
<dbReference type="InterPro" id="IPR001754">
    <property type="entry name" value="OMPdeCOase_dom"/>
</dbReference>
<dbReference type="InterPro" id="IPR023031">
    <property type="entry name" value="OPRT"/>
</dbReference>
<dbReference type="InterPro" id="IPR004467">
    <property type="entry name" value="Or_phspho_trans_dom"/>
</dbReference>
<dbReference type="InterPro" id="IPR000836">
    <property type="entry name" value="PRibTrfase_dom"/>
</dbReference>
<dbReference type="InterPro" id="IPR029057">
    <property type="entry name" value="PRTase-like"/>
</dbReference>
<dbReference type="InterPro" id="IPR011060">
    <property type="entry name" value="RibuloseP-bd_barrel"/>
</dbReference>
<dbReference type="NCBIfam" id="TIGR00336">
    <property type="entry name" value="pyrE"/>
    <property type="match status" value="1"/>
</dbReference>
<dbReference type="NCBIfam" id="TIGR01740">
    <property type="entry name" value="pyrF"/>
    <property type="match status" value="1"/>
</dbReference>
<dbReference type="PANTHER" id="PTHR19278">
    <property type="entry name" value="OROTATE PHOSPHORIBOSYLTRANSFERASE"/>
    <property type="match status" value="1"/>
</dbReference>
<dbReference type="PANTHER" id="PTHR19278:SF9">
    <property type="entry name" value="URIDINE 5'-MONOPHOSPHATE SYNTHASE"/>
    <property type="match status" value="1"/>
</dbReference>
<dbReference type="Pfam" id="PF00215">
    <property type="entry name" value="OMPdecase"/>
    <property type="match status" value="1"/>
</dbReference>
<dbReference type="Pfam" id="PF00156">
    <property type="entry name" value="Pribosyltran"/>
    <property type="match status" value="1"/>
</dbReference>
<dbReference type="SMART" id="SM00934">
    <property type="entry name" value="OMPdecase"/>
    <property type="match status" value="1"/>
</dbReference>
<dbReference type="SUPFAM" id="SSF53271">
    <property type="entry name" value="PRTase-like"/>
    <property type="match status" value="1"/>
</dbReference>
<dbReference type="SUPFAM" id="SSF51366">
    <property type="entry name" value="Ribulose-phoshate binding barrel"/>
    <property type="match status" value="1"/>
</dbReference>
<dbReference type="PROSITE" id="PS00156">
    <property type="entry name" value="OMPDECASE"/>
    <property type="match status" value="1"/>
</dbReference>
<dbReference type="PROSITE" id="PS00103">
    <property type="entry name" value="PUR_PYR_PR_TRANSFER"/>
    <property type="match status" value="1"/>
</dbReference>
<comment type="function">
    <text evidence="1">Bifunctional enzyme catalyzing the last two steps of de novo pyrimidine biosynthesis, orotate phosphoribosyltransferase (OPRT), which converts orotate to orotidine-5'-monophosphate (OMP), and orotidine-5'-monophosphate decarboxylase (ODC), the terminal enzymatic reaction that decarboxylates OMP to uridine monophosphate (UMP).</text>
</comment>
<comment type="catalytic activity">
    <reaction evidence="1">
        <text>orotidine 5'-phosphate + diphosphate = orotate + 5-phospho-alpha-D-ribose 1-diphosphate</text>
        <dbReference type="Rhea" id="RHEA:10380"/>
        <dbReference type="ChEBI" id="CHEBI:30839"/>
        <dbReference type="ChEBI" id="CHEBI:33019"/>
        <dbReference type="ChEBI" id="CHEBI:57538"/>
        <dbReference type="ChEBI" id="CHEBI:58017"/>
        <dbReference type="EC" id="2.4.2.10"/>
    </reaction>
    <physiologicalReaction direction="right-to-left" evidence="1">
        <dbReference type="Rhea" id="RHEA:10382"/>
    </physiologicalReaction>
</comment>
<comment type="catalytic activity">
    <reaction evidence="1">
        <text>orotidine 5'-phosphate + H(+) = UMP + CO2</text>
        <dbReference type="Rhea" id="RHEA:11596"/>
        <dbReference type="ChEBI" id="CHEBI:15378"/>
        <dbReference type="ChEBI" id="CHEBI:16526"/>
        <dbReference type="ChEBI" id="CHEBI:57538"/>
        <dbReference type="ChEBI" id="CHEBI:57865"/>
        <dbReference type="EC" id="4.1.1.23"/>
    </reaction>
    <physiologicalReaction direction="left-to-right" evidence="1">
        <dbReference type="Rhea" id="RHEA:11597"/>
    </physiologicalReaction>
</comment>
<comment type="pathway">
    <text evidence="1">Pyrimidine metabolism; UMP biosynthesis via de novo pathway; UMP from orotate: step 1/2.</text>
</comment>
<comment type="pathway">
    <text evidence="1">Pyrimidine metabolism; UMP biosynthesis via de novo pathway; UMP from orotate: step 2/2.</text>
</comment>
<comment type="subunit">
    <text evidence="1">Homodimer; dimerization is required for enzymatic activity.</text>
</comment>
<comment type="similarity">
    <text evidence="2">In the N-terminal section; belongs to the purine/pyrimidine phosphoribosyltransferase family.</text>
</comment>
<comment type="similarity">
    <text evidence="2">In the C-terminal section; belongs to the OMP decarboxylase family.</text>
</comment>
<name>UMPS_MOUSE</name>
<accession>P13439</accession>
<accession>Q99L26</accession>
<reference key="1">
    <citation type="journal article" date="2004" name="Genome Res.">
        <title>The status, quality, and expansion of the NIH full-length cDNA project: the Mammalian Gene Collection (MGC).</title>
        <authorList>
            <consortium name="The MGC Project Team"/>
        </authorList>
    </citation>
    <scope>NUCLEOTIDE SEQUENCE [LARGE SCALE MRNA]</scope>
</reference>
<reference key="2">
    <citation type="journal article" date="1986" name="J. Biol. Chem.">
        <title>Expression and sequence analysis of a cDNA encoding the orotidine-5'-monophosphate decarboxylase domain from Ehrlich ascites uridylate synthase.</title>
        <authorList>
            <person name="Ohmstede C.A."/>
            <person name="Langdon S.D."/>
            <person name="Chae C.B."/>
            <person name="Jones M.E."/>
        </authorList>
    </citation>
    <scope>NUCLEOTIDE SEQUENCE [MRNA] OF 216-481</scope>
</reference>
<reference key="3">
    <citation type="journal article" date="2010" name="Cell">
        <title>A tissue-specific atlas of mouse protein phosphorylation and expression.</title>
        <authorList>
            <person name="Huttlin E.L."/>
            <person name="Jedrychowski M.P."/>
            <person name="Elias J.E."/>
            <person name="Goswami T."/>
            <person name="Rad R."/>
            <person name="Beausoleil S.A."/>
            <person name="Villen J."/>
            <person name="Haas W."/>
            <person name="Sowa M.E."/>
            <person name="Gygi S.P."/>
        </authorList>
    </citation>
    <scope>IDENTIFICATION BY MASS SPECTROMETRY [LARGE SCALE ANALYSIS]</scope>
    <source>
        <tissue>Brain</tissue>
        <tissue>Brown adipose tissue</tissue>
        <tissue>Kidney</tissue>
        <tissue>Liver</tissue>
        <tissue>Lung</tissue>
        <tissue>Pancreas</tissue>
        <tissue>Spleen</tissue>
        <tissue>Testis</tissue>
    </source>
</reference>
<sequence>MEVASQALGPLVTELYDVQAFKFGSFVLKSGLSSPVYIDLRGIVSRPRLLSQVADILFQTAKNAGISFDSVCGVPYTALPLATVICSANHIPMLIRRKETKDYGTKRLVEGEINPGQTCLVIEDVVTSGASVLETVEVLQKEGLKVTDAIVLLDREQGGKDKLQAQGIRLHAVCTLSQMLEILQQQEKIDADMVGRVKRFIQENVFSAANHNGLPPPEKKACKELSFGARAELPGTHPLASKLLRLMQKKETNLCLSADVSEARELLQLADALGPSICMLKTHVDILNDFTLDVMEELTALAKRHEFLIFEDRKFADIGNTVKKQYESGTFKIASWADIVNAHVVPGSGVVKGLQEVGLPLHRACLLIAEMSSAGSLATGNYTKAAVGMAEEHCEFVIGFISGSRVSMKPEFLHLTPGVQLETGGDHLGQQYNSPQEVIGKRGSDVIIVGRGILAAANRLEAAEMYRKAAWEAYLSRLAVQ</sequence>
<evidence type="ECO:0000250" key="1">
    <source>
        <dbReference type="UniProtKB" id="P11172"/>
    </source>
</evidence>
<evidence type="ECO:0000305" key="2"/>